<comment type="function">
    <text evidence="7">Multifunctional protein that encodes the first 3 enzymatic activities of the de novo pyrimidine pathway: carbamoylphosphate synthetase (CPSase; EC 6.3.5.5), aspartate transcarbamylase (ATCase; EC 2.1.3.2) and dihydroorotase (DHOase; EC 3.5.2.3). The CPSase-function is accomplished in 2 steps, by a glutamine-dependent amidotransferase activity (GATase) that binds and cleaves glutamine to produce ammonia, followed by an ammonium-dependent carbamoyl phosphate synthetase, which reacts with the ammonia, hydrogencarbonate and ATP to form carbamoyl phosphate. The endogenously produced carbamoyl phosphate is sequestered and channeled to the ATCase active site. ATCase then catalyzes the formation of carbamoyl-L-aspartate from L-aspartate and carbamoyl phosphate. In the last step, DHOase catalyzes the cyclization of carbamoyl aspartate to dihydroorotate.</text>
</comment>
<comment type="catalytic activity">
    <reaction evidence="7">
        <text>hydrogencarbonate + L-glutamine + 2 ATP + H2O = carbamoyl phosphate + L-glutamate + 2 ADP + phosphate + 2 H(+)</text>
        <dbReference type="Rhea" id="RHEA:18633"/>
        <dbReference type="ChEBI" id="CHEBI:15377"/>
        <dbReference type="ChEBI" id="CHEBI:15378"/>
        <dbReference type="ChEBI" id="CHEBI:17544"/>
        <dbReference type="ChEBI" id="CHEBI:29985"/>
        <dbReference type="ChEBI" id="CHEBI:30616"/>
        <dbReference type="ChEBI" id="CHEBI:43474"/>
        <dbReference type="ChEBI" id="CHEBI:58228"/>
        <dbReference type="ChEBI" id="CHEBI:58359"/>
        <dbReference type="ChEBI" id="CHEBI:456216"/>
        <dbReference type="EC" id="6.3.5.5"/>
    </reaction>
</comment>
<comment type="catalytic activity">
    <reaction evidence="3">
        <text>L-glutamine + H2O = L-glutamate + NH4(+)</text>
        <dbReference type="Rhea" id="RHEA:15889"/>
        <dbReference type="ChEBI" id="CHEBI:15377"/>
        <dbReference type="ChEBI" id="CHEBI:28938"/>
        <dbReference type="ChEBI" id="CHEBI:29985"/>
        <dbReference type="ChEBI" id="CHEBI:58359"/>
        <dbReference type="EC" id="3.5.1.2"/>
    </reaction>
</comment>
<comment type="catalytic activity">
    <reaction evidence="3">
        <text>hydrogencarbonate + NH4(+) + 2 ATP = carbamoyl phosphate + 2 ADP + phosphate + 2 H(+)</text>
        <dbReference type="Rhea" id="RHEA:18029"/>
        <dbReference type="ChEBI" id="CHEBI:15378"/>
        <dbReference type="ChEBI" id="CHEBI:17544"/>
        <dbReference type="ChEBI" id="CHEBI:28938"/>
        <dbReference type="ChEBI" id="CHEBI:30616"/>
        <dbReference type="ChEBI" id="CHEBI:43474"/>
        <dbReference type="ChEBI" id="CHEBI:58228"/>
        <dbReference type="ChEBI" id="CHEBI:456216"/>
        <dbReference type="EC" id="6.3.4.16"/>
    </reaction>
</comment>
<comment type="catalytic activity">
    <reaction evidence="7">
        <text>carbamoyl phosphate + L-aspartate = N-carbamoyl-L-aspartate + phosphate + H(+)</text>
        <dbReference type="Rhea" id="RHEA:20013"/>
        <dbReference type="ChEBI" id="CHEBI:15378"/>
        <dbReference type="ChEBI" id="CHEBI:29991"/>
        <dbReference type="ChEBI" id="CHEBI:32814"/>
        <dbReference type="ChEBI" id="CHEBI:43474"/>
        <dbReference type="ChEBI" id="CHEBI:58228"/>
        <dbReference type="EC" id="2.1.3.2"/>
    </reaction>
</comment>
<comment type="catalytic activity">
    <reaction evidence="7">
        <text>(S)-dihydroorotate + H2O = N-carbamoyl-L-aspartate + H(+)</text>
        <dbReference type="Rhea" id="RHEA:24296"/>
        <dbReference type="ChEBI" id="CHEBI:15377"/>
        <dbReference type="ChEBI" id="CHEBI:15378"/>
        <dbReference type="ChEBI" id="CHEBI:30864"/>
        <dbReference type="ChEBI" id="CHEBI:32814"/>
        <dbReference type="EC" id="3.5.2.3"/>
    </reaction>
</comment>
<comment type="cofactor">
    <cofactor evidence="8">
        <name>Mg(2+)</name>
        <dbReference type="ChEBI" id="CHEBI:18420"/>
    </cofactor>
    <cofactor evidence="8">
        <name>Mn(2+)</name>
        <dbReference type="ChEBI" id="CHEBI:29035"/>
    </cofactor>
    <text evidence="8">Binds 4 Mg(2+) or Mn(2+) ions per subunit.</text>
</comment>
<comment type="cofactor">
    <cofactor evidence="7">
        <name>Zn(2+)</name>
        <dbReference type="ChEBI" id="CHEBI:29105"/>
    </cofactor>
    <text evidence="7">Binds 3 Zn(2+) ions per subunit (for dihydroorotase activity).</text>
</comment>
<comment type="activity regulation">
    <text evidence="7">Allosterically regulated and controlled by phosphorylation. 5-phosphoribose 1-diphosphate is an activator while UMP is an inhibitor of the CPSase reaction.</text>
</comment>
<comment type="pathway">
    <text evidence="7">Pyrimidine metabolism; UMP biosynthesis via de novo pathway; (S)-dihydroorotate from bicarbonate: step 1/3.</text>
</comment>
<comment type="pathway">
    <text evidence="7">Pyrimidine metabolism; UMP biosynthesis via de novo pathway; (S)-dihydroorotate from bicarbonate: step 2/3.</text>
</comment>
<comment type="pathway">
    <text evidence="7">Pyrimidine metabolism; UMP biosynthesis via de novo pathway; (S)-dihydroorotate from bicarbonate: step 3/3.</text>
</comment>
<comment type="subunit">
    <text evidence="7">Homohexamer.</text>
</comment>
<comment type="subcellular location">
    <subcellularLocation>
        <location>Cytoplasm</location>
    </subcellularLocation>
</comment>
<comment type="developmental stage">
    <text>Seen during growth but not during development.</text>
</comment>
<comment type="miscellaneous">
    <text evidence="3">GATase (glutamine amidotransferase) and CPSase (carbamoyl phosphate synthase) form together the glutamine-dependent CPSase (GD-CPSase) (EC 6.3.5.5).</text>
</comment>
<comment type="similarity">
    <text evidence="12">In the N-terminal section; belongs to the CarA family.</text>
</comment>
<comment type="similarity">
    <text evidence="12">In the 2nd section; belongs to the CarB family.</text>
</comment>
<comment type="similarity">
    <text evidence="12">In the 3rd section; belongs to the metallo-dependent hydrolases superfamily. DHOase family. CAD subfamily.</text>
</comment>
<comment type="similarity">
    <text evidence="12">In the C-terminal section; belongs to the aspartate/ornithine carbamoyltransferase superfamily. ATCase family.</text>
</comment>
<name>PYR1_DICDI</name>
<keyword id="KW-0007">Acetylation</keyword>
<keyword id="KW-0021">Allosteric enzyme</keyword>
<keyword id="KW-0067">ATP-binding</keyword>
<keyword id="KW-0963">Cytoplasm</keyword>
<keyword id="KW-0903">Direct protein sequencing</keyword>
<keyword id="KW-0378">Hydrolase</keyword>
<keyword id="KW-0436">Ligase</keyword>
<keyword id="KW-0479">Metal-binding</keyword>
<keyword id="KW-0511">Multifunctional enzyme</keyword>
<keyword id="KW-0547">Nucleotide-binding</keyword>
<keyword id="KW-0665">Pyrimidine biosynthesis</keyword>
<keyword id="KW-1185">Reference proteome</keyword>
<keyword id="KW-0677">Repeat</keyword>
<keyword id="KW-0808">Transferase</keyword>
<keyword id="KW-0862">Zinc</keyword>
<gene>
    <name type="primary">pyr1-3</name>
    <name type="ORF">DDB_G0276335</name>
</gene>
<evidence type="ECO:0000250" key="1">
    <source>
        <dbReference type="UniProtKB" id="P00968"/>
    </source>
</evidence>
<evidence type="ECO:0000250" key="2">
    <source>
        <dbReference type="UniProtKB" id="P05020"/>
    </source>
</evidence>
<evidence type="ECO:0000250" key="3">
    <source>
        <dbReference type="UniProtKB" id="P07259"/>
    </source>
</evidence>
<evidence type="ECO:0000250" key="4">
    <source>
        <dbReference type="UniProtKB" id="P08955"/>
    </source>
</evidence>
<evidence type="ECO:0000250" key="5">
    <source>
        <dbReference type="UniProtKB" id="P0A6F1"/>
    </source>
</evidence>
<evidence type="ECO:0000250" key="6">
    <source>
        <dbReference type="UniProtKB" id="P0A786"/>
    </source>
</evidence>
<evidence type="ECO:0000250" key="7">
    <source>
        <dbReference type="UniProtKB" id="P27708"/>
    </source>
</evidence>
<evidence type="ECO:0000255" key="8">
    <source>
        <dbReference type="PROSITE-ProRule" id="PRU00409"/>
    </source>
</evidence>
<evidence type="ECO:0000255" key="9">
    <source>
        <dbReference type="PROSITE-ProRule" id="PRU00605"/>
    </source>
</evidence>
<evidence type="ECO:0000255" key="10">
    <source>
        <dbReference type="PROSITE-ProRule" id="PRU01202"/>
    </source>
</evidence>
<evidence type="ECO:0000269" key="11">
    <source ref="3"/>
</evidence>
<evidence type="ECO:0000305" key="12"/>
<dbReference type="EC" id="6.3.5.5"/>
<dbReference type="EC" id="3.5.1.2" evidence="3"/>
<dbReference type="EC" id="6.3.4.16" evidence="3"/>
<dbReference type="EC" id="2.1.3.2"/>
<dbReference type="EC" id="3.5.2.3"/>
<dbReference type="EMBL" id="AAFI02000014">
    <property type="protein sequence ID" value="EAL69248.1"/>
    <property type="molecule type" value="Genomic_DNA"/>
</dbReference>
<dbReference type="EMBL" id="X14633">
    <property type="protein sequence ID" value="CAA32781.1"/>
    <property type="molecule type" value="Genomic_DNA"/>
</dbReference>
<dbReference type="EMBL" id="X14634">
    <property type="protein sequence ID" value="CAA32782.1"/>
    <property type="molecule type" value="Genomic_DNA"/>
</dbReference>
<dbReference type="EMBL" id="X55433">
    <property type="protein sequence ID" value="CAA39077.1"/>
    <property type="molecule type" value="Genomic_DNA"/>
</dbReference>
<dbReference type="PIR" id="S02800">
    <property type="entry name" value="QZDOP3"/>
</dbReference>
<dbReference type="PIR" id="S23738">
    <property type="entry name" value="S23738"/>
</dbReference>
<dbReference type="RefSeq" id="XP_643196.1">
    <property type="nucleotide sequence ID" value="XM_638104.1"/>
</dbReference>
<dbReference type="SMR" id="P20054"/>
<dbReference type="FunCoup" id="P20054">
    <property type="interactions" value="665"/>
</dbReference>
<dbReference type="STRING" id="44689.P20054"/>
<dbReference type="PaxDb" id="44689-DDB0201646"/>
<dbReference type="EnsemblProtists" id="EAL69248">
    <property type="protein sequence ID" value="EAL69248"/>
    <property type="gene ID" value="DDB_G0276335"/>
</dbReference>
<dbReference type="GeneID" id="8620470"/>
<dbReference type="KEGG" id="ddi:DDB_G0276335"/>
<dbReference type="dictyBase" id="DDB_G0276335">
    <property type="gene designation" value="pyr1-3"/>
</dbReference>
<dbReference type="VEuPathDB" id="AmoebaDB:DDB_G0276335"/>
<dbReference type="eggNOG" id="KOG0370">
    <property type="taxonomic scope" value="Eukaryota"/>
</dbReference>
<dbReference type="HOGENOM" id="CLU_000513_2_1_1"/>
<dbReference type="InParanoid" id="P20054"/>
<dbReference type="OMA" id="WSPFNGK"/>
<dbReference type="PhylomeDB" id="P20054"/>
<dbReference type="Reactome" id="R-DDI-500753">
    <property type="pathway name" value="Pyrimidine biosynthesis"/>
</dbReference>
<dbReference type="UniPathway" id="UPA00070">
    <property type="reaction ID" value="UER00115"/>
</dbReference>
<dbReference type="UniPathway" id="UPA00070">
    <property type="reaction ID" value="UER00116"/>
</dbReference>
<dbReference type="UniPathway" id="UPA00070">
    <property type="reaction ID" value="UER00117"/>
</dbReference>
<dbReference type="PRO" id="PR:P20054"/>
<dbReference type="Proteomes" id="UP000002195">
    <property type="component" value="Chromosome 2"/>
</dbReference>
<dbReference type="GO" id="GO:0005737">
    <property type="term" value="C:cytoplasm"/>
    <property type="evidence" value="ECO:0000318"/>
    <property type="project" value="GO_Central"/>
</dbReference>
<dbReference type="GO" id="GO:0016597">
    <property type="term" value="F:amino acid binding"/>
    <property type="evidence" value="ECO:0007669"/>
    <property type="project" value="InterPro"/>
</dbReference>
<dbReference type="GO" id="GO:0004070">
    <property type="term" value="F:aspartate carbamoyltransferase activity"/>
    <property type="evidence" value="ECO:0000314"/>
    <property type="project" value="dictyBase"/>
</dbReference>
<dbReference type="GO" id="GO:0005524">
    <property type="term" value="F:ATP binding"/>
    <property type="evidence" value="ECO:0007669"/>
    <property type="project" value="UniProtKB-KW"/>
</dbReference>
<dbReference type="GO" id="GO:0004087">
    <property type="term" value="F:carbamoyl-phosphate synthase (ammonia) activity"/>
    <property type="evidence" value="ECO:0007669"/>
    <property type="project" value="RHEA"/>
</dbReference>
<dbReference type="GO" id="GO:0004088">
    <property type="term" value="F:carbamoyl-phosphate synthase (glutamine-hydrolyzing) activity"/>
    <property type="evidence" value="ECO:0000314"/>
    <property type="project" value="dictyBase"/>
</dbReference>
<dbReference type="GO" id="GO:0004151">
    <property type="term" value="F:dihydroorotase activity"/>
    <property type="evidence" value="ECO:0000314"/>
    <property type="project" value="dictyBase"/>
</dbReference>
<dbReference type="GO" id="GO:0004359">
    <property type="term" value="F:glutaminase activity"/>
    <property type="evidence" value="ECO:0007669"/>
    <property type="project" value="RHEA"/>
</dbReference>
<dbReference type="GO" id="GO:0046872">
    <property type="term" value="F:metal ion binding"/>
    <property type="evidence" value="ECO:0007669"/>
    <property type="project" value="UniProtKB-KW"/>
</dbReference>
<dbReference type="GO" id="GO:0006207">
    <property type="term" value="P:'de novo' pyrimidine nucleobase biosynthetic process"/>
    <property type="evidence" value="ECO:0000250"/>
    <property type="project" value="dictyBase"/>
</dbReference>
<dbReference type="GO" id="GO:0044205">
    <property type="term" value="P:'de novo' UMP biosynthetic process"/>
    <property type="evidence" value="ECO:0007669"/>
    <property type="project" value="UniProtKB-UniPathway"/>
</dbReference>
<dbReference type="GO" id="GO:0006541">
    <property type="term" value="P:glutamine metabolic process"/>
    <property type="evidence" value="ECO:0000314"/>
    <property type="project" value="dictyBase"/>
</dbReference>
<dbReference type="CDD" id="cd01316">
    <property type="entry name" value="CAD_DHOase"/>
    <property type="match status" value="1"/>
</dbReference>
<dbReference type="CDD" id="cd01744">
    <property type="entry name" value="GATase1_CPSase"/>
    <property type="match status" value="1"/>
</dbReference>
<dbReference type="CDD" id="cd01423">
    <property type="entry name" value="MGS_CPS_I_III"/>
    <property type="match status" value="1"/>
</dbReference>
<dbReference type="FunFam" id="3.40.50.880:FF:000162">
    <property type="entry name" value="Aspartate carbamoyltransferase"/>
    <property type="match status" value="1"/>
</dbReference>
<dbReference type="FunFam" id="3.40.50.1370:FF:000002">
    <property type="entry name" value="Aspartate carbamoyltransferase 2"/>
    <property type="match status" value="1"/>
</dbReference>
<dbReference type="FunFam" id="3.40.50.1370:FF:000005">
    <property type="entry name" value="CAD protein-like isoform X1"/>
    <property type="match status" value="1"/>
</dbReference>
<dbReference type="FunFam" id="3.40.50.1380:FF:000005">
    <property type="entry name" value="CAD protein-like isoform X1"/>
    <property type="match status" value="1"/>
</dbReference>
<dbReference type="FunFam" id="3.30.470.20:FF:000004">
    <property type="entry name" value="Carbamoyl-phosphate synthase (glutamine-hydrolyzing)"/>
    <property type="match status" value="1"/>
</dbReference>
<dbReference type="FunFam" id="3.50.30.20:FF:000002">
    <property type="entry name" value="Carbamoyl-phosphate synthase 1, mitochondrial"/>
    <property type="match status" value="1"/>
</dbReference>
<dbReference type="FunFam" id="1.10.1030.10:FF:000001">
    <property type="entry name" value="Carbamoyl-phosphate synthase large chain"/>
    <property type="match status" value="1"/>
</dbReference>
<dbReference type="FunFam" id="3.20.20.140:FF:000036">
    <property type="entry name" value="Carbamoyl-phosphate synthase large chain"/>
    <property type="match status" value="1"/>
</dbReference>
<dbReference type="FunFam" id="3.30.1490.20:FF:000001">
    <property type="entry name" value="Carbamoyl-phosphate synthase large chain"/>
    <property type="match status" value="1"/>
</dbReference>
<dbReference type="FunFam" id="3.30.470.20:FF:000001">
    <property type="entry name" value="Carbamoyl-phosphate synthase large chain"/>
    <property type="match status" value="1"/>
</dbReference>
<dbReference type="FunFam" id="3.40.50.20:FF:000001">
    <property type="entry name" value="Carbamoyl-phosphate synthase large chain"/>
    <property type="match status" value="1"/>
</dbReference>
<dbReference type="FunFam" id="3.40.50.20:FF:000002">
    <property type="entry name" value="Carbamoyl-phosphate synthase large chain"/>
    <property type="match status" value="1"/>
</dbReference>
<dbReference type="Gene3D" id="3.40.50.20">
    <property type="match status" value="2"/>
</dbReference>
<dbReference type="Gene3D" id="3.40.50.880">
    <property type="match status" value="1"/>
</dbReference>
<dbReference type="Gene3D" id="3.40.50.1370">
    <property type="entry name" value="Aspartate/ornithine carbamoyltransferase"/>
    <property type="match status" value="2"/>
</dbReference>
<dbReference type="Gene3D" id="3.30.1490.20">
    <property type="entry name" value="ATP-grasp fold, A domain"/>
    <property type="match status" value="1"/>
</dbReference>
<dbReference type="Gene3D" id="3.30.470.20">
    <property type="entry name" value="ATP-grasp fold, B domain"/>
    <property type="match status" value="2"/>
</dbReference>
<dbReference type="Gene3D" id="3.50.30.20">
    <property type="entry name" value="Carbamoyl-phosphate synthase small subunit, N-terminal domain"/>
    <property type="match status" value="1"/>
</dbReference>
<dbReference type="Gene3D" id="1.10.1030.10">
    <property type="entry name" value="Carbamoyl-phosphate synthetase, large subunit oligomerisation domain"/>
    <property type="match status" value="1"/>
</dbReference>
<dbReference type="Gene3D" id="3.20.20.140">
    <property type="entry name" value="Metal-dependent hydrolases"/>
    <property type="match status" value="1"/>
</dbReference>
<dbReference type="Gene3D" id="3.40.50.1380">
    <property type="entry name" value="Methylglyoxal synthase-like domain"/>
    <property type="match status" value="1"/>
</dbReference>
<dbReference type="HAMAP" id="MF_00001">
    <property type="entry name" value="Asp_carb_tr"/>
    <property type="match status" value="1"/>
</dbReference>
<dbReference type="HAMAP" id="MF_01209">
    <property type="entry name" value="CPSase_S_chain"/>
    <property type="match status" value="1"/>
</dbReference>
<dbReference type="InterPro" id="IPR006680">
    <property type="entry name" value="Amidohydro-rel"/>
</dbReference>
<dbReference type="InterPro" id="IPR006132">
    <property type="entry name" value="Asp/Orn_carbamoyltranf_P-bd"/>
</dbReference>
<dbReference type="InterPro" id="IPR006130">
    <property type="entry name" value="Asp/Orn_carbamoylTrfase"/>
</dbReference>
<dbReference type="InterPro" id="IPR036901">
    <property type="entry name" value="Asp/Orn_carbamoylTrfase_sf"/>
</dbReference>
<dbReference type="InterPro" id="IPR002082">
    <property type="entry name" value="Asp_carbamoyltransf"/>
</dbReference>
<dbReference type="InterPro" id="IPR006131">
    <property type="entry name" value="Asp_carbamoyltransf_Asp/Orn-bd"/>
</dbReference>
<dbReference type="InterPro" id="IPR011761">
    <property type="entry name" value="ATP-grasp"/>
</dbReference>
<dbReference type="InterPro" id="IPR013815">
    <property type="entry name" value="ATP_grasp_subdomain_1"/>
</dbReference>
<dbReference type="InterPro" id="IPR006275">
    <property type="entry name" value="CarbamoylP_synth_lsu"/>
</dbReference>
<dbReference type="InterPro" id="IPR005480">
    <property type="entry name" value="CarbamoylP_synth_lsu_oligo"/>
</dbReference>
<dbReference type="InterPro" id="IPR036897">
    <property type="entry name" value="CarbamoylP_synth_lsu_oligo_sf"/>
</dbReference>
<dbReference type="InterPro" id="IPR006274">
    <property type="entry name" value="CarbamoylP_synth_ssu"/>
</dbReference>
<dbReference type="InterPro" id="IPR002474">
    <property type="entry name" value="CarbamoylP_synth_ssu_N"/>
</dbReference>
<dbReference type="InterPro" id="IPR036480">
    <property type="entry name" value="CarbP_synth_ssu_N_sf"/>
</dbReference>
<dbReference type="InterPro" id="IPR005479">
    <property type="entry name" value="CbamoylP_synth_lsu-like_ATP-bd"/>
</dbReference>
<dbReference type="InterPro" id="IPR005483">
    <property type="entry name" value="CbamoylP_synth_lsu_CPSase_dom"/>
</dbReference>
<dbReference type="InterPro" id="IPR029062">
    <property type="entry name" value="Class_I_gatase-like"/>
</dbReference>
<dbReference type="InterPro" id="IPR035686">
    <property type="entry name" value="CPSase_GATase1"/>
</dbReference>
<dbReference type="InterPro" id="IPR002195">
    <property type="entry name" value="Dihydroorotase_CS"/>
</dbReference>
<dbReference type="InterPro" id="IPR017926">
    <property type="entry name" value="GATASE"/>
</dbReference>
<dbReference type="InterPro" id="IPR011059">
    <property type="entry name" value="Metal-dep_hydrolase_composite"/>
</dbReference>
<dbReference type="InterPro" id="IPR032466">
    <property type="entry name" value="Metal_Hydrolase"/>
</dbReference>
<dbReference type="InterPro" id="IPR011607">
    <property type="entry name" value="MGS-like_dom"/>
</dbReference>
<dbReference type="InterPro" id="IPR036914">
    <property type="entry name" value="MGS-like_dom_sf"/>
</dbReference>
<dbReference type="InterPro" id="IPR016185">
    <property type="entry name" value="PreATP-grasp_dom_sf"/>
</dbReference>
<dbReference type="NCBIfam" id="TIGR00670">
    <property type="entry name" value="asp_carb_tr"/>
    <property type="match status" value="1"/>
</dbReference>
<dbReference type="NCBIfam" id="TIGR01369">
    <property type="entry name" value="CPSaseII_lrg"/>
    <property type="match status" value="1"/>
</dbReference>
<dbReference type="NCBIfam" id="TIGR01368">
    <property type="entry name" value="CPSaseIIsmall"/>
    <property type="match status" value="1"/>
</dbReference>
<dbReference type="NCBIfam" id="NF002032">
    <property type="entry name" value="PRK00856.1"/>
    <property type="match status" value="1"/>
</dbReference>
<dbReference type="NCBIfam" id="NF003671">
    <property type="entry name" value="PRK05294.1"/>
    <property type="match status" value="1"/>
</dbReference>
<dbReference type="NCBIfam" id="NF009455">
    <property type="entry name" value="PRK12815.1"/>
    <property type="match status" value="1"/>
</dbReference>
<dbReference type="NCBIfam" id="NF009475">
    <property type="entry name" value="PRK12838.1"/>
    <property type="match status" value="1"/>
</dbReference>
<dbReference type="PANTHER" id="PTHR11405:SF4">
    <property type="entry name" value="CARBAMOYL-PHOSPHATE SYNTHASE ARGININE-SPECIFIC SMALL CHAIN"/>
    <property type="match status" value="1"/>
</dbReference>
<dbReference type="PANTHER" id="PTHR11405">
    <property type="entry name" value="CARBAMOYLTRANSFERASE FAMILY MEMBER"/>
    <property type="match status" value="1"/>
</dbReference>
<dbReference type="Pfam" id="PF01979">
    <property type="entry name" value="Amidohydro_1"/>
    <property type="match status" value="1"/>
</dbReference>
<dbReference type="Pfam" id="PF02786">
    <property type="entry name" value="CPSase_L_D2"/>
    <property type="match status" value="2"/>
</dbReference>
<dbReference type="Pfam" id="PF02787">
    <property type="entry name" value="CPSase_L_D3"/>
    <property type="match status" value="1"/>
</dbReference>
<dbReference type="Pfam" id="PF00988">
    <property type="entry name" value="CPSase_sm_chain"/>
    <property type="match status" value="1"/>
</dbReference>
<dbReference type="Pfam" id="PF00117">
    <property type="entry name" value="GATase"/>
    <property type="match status" value="1"/>
</dbReference>
<dbReference type="Pfam" id="PF02142">
    <property type="entry name" value="MGS"/>
    <property type="match status" value="1"/>
</dbReference>
<dbReference type="Pfam" id="PF00185">
    <property type="entry name" value="OTCace"/>
    <property type="match status" value="1"/>
</dbReference>
<dbReference type="Pfam" id="PF02729">
    <property type="entry name" value="OTCace_N"/>
    <property type="match status" value="1"/>
</dbReference>
<dbReference type="PRINTS" id="PR00100">
    <property type="entry name" value="AOTCASE"/>
</dbReference>
<dbReference type="PRINTS" id="PR00101">
    <property type="entry name" value="ATCASE"/>
</dbReference>
<dbReference type="PRINTS" id="PR00098">
    <property type="entry name" value="CPSASE"/>
</dbReference>
<dbReference type="PRINTS" id="PR00099">
    <property type="entry name" value="CPSGATASE"/>
</dbReference>
<dbReference type="SMART" id="SM01096">
    <property type="entry name" value="CPSase_L_D3"/>
    <property type="match status" value="1"/>
</dbReference>
<dbReference type="SMART" id="SM01097">
    <property type="entry name" value="CPSase_sm_chain"/>
    <property type="match status" value="1"/>
</dbReference>
<dbReference type="SMART" id="SM00851">
    <property type="entry name" value="MGS"/>
    <property type="match status" value="1"/>
</dbReference>
<dbReference type="SUPFAM" id="SSF53671">
    <property type="entry name" value="Aspartate/ornithine carbamoyltransferase"/>
    <property type="match status" value="1"/>
</dbReference>
<dbReference type="SUPFAM" id="SSF48108">
    <property type="entry name" value="Carbamoyl phosphate synthetase, large subunit connection domain"/>
    <property type="match status" value="1"/>
</dbReference>
<dbReference type="SUPFAM" id="SSF52021">
    <property type="entry name" value="Carbamoyl phosphate synthetase, small subunit N-terminal domain"/>
    <property type="match status" value="1"/>
</dbReference>
<dbReference type="SUPFAM" id="SSF52317">
    <property type="entry name" value="Class I glutamine amidotransferase-like"/>
    <property type="match status" value="1"/>
</dbReference>
<dbReference type="SUPFAM" id="SSF51338">
    <property type="entry name" value="Composite domain of metallo-dependent hydrolases"/>
    <property type="match status" value="1"/>
</dbReference>
<dbReference type="SUPFAM" id="SSF56059">
    <property type="entry name" value="Glutathione synthetase ATP-binding domain-like"/>
    <property type="match status" value="2"/>
</dbReference>
<dbReference type="SUPFAM" id="SSF51556">
    <property type="entry name" value="Metallo-dependent hydrolases"/>
    <property type="match status" value="1"/>
</dbReference>
<dbReference type="SUPFAM" id="SSF52335">
    <property type="entry name" value="Methylglyoxal synthase-like"/>
    <property type="match status" value="1"/>
</dbReference>
<dbReference type="SUPFAM" id="SSF52440">
    <property type="entry name" value="PreATP-grasp domain"/>
    <property type="match status" value="2"/>
</dbReference>
<dbReference type="PROSITE" id="PS50975">
    <property type="entry name" value="ATP_GRASP"/>
    <property type="match status" value="2"/>
</dbReference>
<dbReference type="PROSITE" id="PS00097">
    <property type="entry name" value="CARBAMOYLTRANSFERASE"/>
    <property type="match status" value="1"/>
</dbReference>
<dbReference type="PROSITE" id="PS00866">
    <property type="entry name" value="CPSASE_1"/>
    <property type="match status" value="2"/>
</dbReference>
<dbReference type="PROSITE" id="PS00867">
    <property type="entry name" value="CPSASE_2"/>
    <property type="match status" value="2"/>
</dbReference>
<dbReference type="PROSITE" id="PS00482">
    <property type="entry name" value="DIHYDROOROTASE_1"/>
    <property type="match status" value="1"/>
</dbReference>
<dbReference type="PROSITE" id="PS00483">
    <property type="entry name" value="DIHYDROOROTASE_2"/>
    <property type="match status" value="1"/>
</dbReference>
<dbReference type="PROSITE" id="PS51273">
    <property type="entry name" value="GATASE_TYPE_1"/>
    <property type="match status" value="1"/>
</dbReference>
<dbReference type="PROSITE" id="PS51855">
    <property type="entry name" value="MGS"/>
    <property type="match status" value="1"/>
</dbReference>
<protein>
    <recommendedName>
        <fullName>Multifunctional protein pyr1-3</fullName>
    </recommendedName>
    <domain>
        <recommendedName>
            <fullName>Glutamine-dependent carbamoyl-phosphate synthase</fullName>
            <ecNumber>6.3.5.5</ecNumber>
        </recommendedName>
    </domain>
    <domain>
        <recommendedName>
            <fullName>Glutamine amidotransferase</fullName>
            <shortName>GATase</shortName>
            <shortName>GLNase</shortName>
            <ecNumber evidence="3">3.5.1.2</ecNumber>
        </recommendedName>
    </domain>
    <domain>
        <recommendedName>
            <fullName>Ammonium-dependent carbamoyl phosphate synthase</fullName>
            <shortName>CPS</shortName>
            <shortName>CPSase</shortName>
            <ecNumber evidence="3">6.3.4.16</ecNumber>
        </recommendedName>
    </domain>
    <domain>
        <recommendedName>
            <fullName>Aspartate carbamoyltransferase</fullName>
            <ecNumber>2.1.3.2</ecNumber>
        </recommendedName>
    </domain>
    <domain>
        <recommendedName>
            <fullName>Dihydroorotase</fullName>
            <ecNumber>3.5.2.3</ecNumber>
        </recommendedName>
    </domain>
</protein>
<accession>P20054</accession>
<accession>Q551R5</accession>
<accession>Q86AD0</accession>
<reference key="1">
    <citation type="journal article" date="2002" name="Nature">
        <title>Sequence and analysis of chromosome 2 of Dictyostelium discoideum.</title>
        <authorList>
            <person name="Gloeckner G."/>
            <person name="Eichinger L."/>
            <person name="Szafranski K."/>
            <person name="Pachebat J.A."/>
            <person name="Bankier A.T."/>
            <person name="Dear P.H."/>
            <person name="Lehmann R."/>
            <person name="Baumgart C."/>
            <person name="Parra G."/>
            <person name="Abril J.F."/>
            <person name="Guigo R."/>
            <person name="Kumpf K."/>
            <person name="Tunggal B."/>
            <person name="Cox E.C."/>
            <person name="Quail M.A."/>
            <person name="Platzer M."/>
            <person name="Rosenthal A."/>
            <person name="Noegel A.A."/>
        </authorList>
    </citation>
    <scope>NUCLEOTIDE SEQUENCE [LARGE SCALE GENOMIC DNA]</scope>
    <source>
        <strain>AX4</strain>
    </source>
</reference>
<reference key="2">
    <citation type="journal article" date="2005" name="Nature">
        <title>The genome of the social amoeba Dictyostelium discoideum.</title>
        <authorList>
            <person name="Eichinger L."/>
            <person name="Pachebat J.A."/>
            <person name="Gloeckner G."/>
            <person name="Rajandream M.A."/>
            <person name="Sucgang R."/>
            <person name="Berriman M."/>
            <person name="Song J."/>
            <person name="Olsen R."/>
            <person name="Szafranski K."/>
            <person name="Xu Q."/>
            <person name="Tunggal B."/>
            <person name="Kummerfeld S."/>
            <person name="Madera M."/>
            <person name="Konfortov B.A."/>
            <person name="Rivero F."/>
            <person name="Bankier A.T."/>
            <person name="Lehmann R."/>
            <person name="Hamlin N."/>
            <person name="Davies R."/>
            <person name="Gaudet P."/>
            <person name="Fey P."/>
            <person name="Pilcher K."/>
            <person name="Chen G."/>
            <person name="Saunders D."/>
            <person name="Sodergren E.J."/>
            <person name="Davis P."/>
            <person name="Kerhornou A."/>
            <person name="Nie X."/>
            <person name="Hall N."/>
            <person name="Anjard C."/>
            <person name="Hemphill L."/>
            <person name="Bason N."/>
            <person name="Farbrother P."/>
            <person name="Desany B."/>
            <person name="Just E."/>
            <person name="Morio T."/>
            <person name="Rost R."/>
            <person name="Churcher C.M."/>
            <person name="Cooper J."/>
            <person name="Haydock S."/>
            <person name="van Driessche N."/>
            <person name="Cronin A."/>
            <person name="Goodhead I."/>
            <person name="Muzny D.M."/>
            <person name="Mourier T."/>
            <person name="Pain A."/>
            <person name="Lu M."/>
            <person name="Harper D."/>
            <person name="Lindsay R."/>
            <person name="Hauser H."/>
            <person name="James K.D."/>
            <person name="Quiles M."/>
            <person name="Madan Babu M."/>
            <person name="Saito T."/>
            <person name="Buchrieser C."/>
            <person name="Wardroper A."/>
            <person name="Felder M."/>
            <person name="Thangavelu M."/>
            <person name="Johnson D."/>
            <person name="Knights A."/>
            <person name="Loulseged H."/>
            <person name="Mungall K.L."/>
            <person name="Oliver K."/>
            <person name="Price C."/>
            <person name="Quail M.A."/>
            <person name="Urushihara H."/>
            <person name="Hernandez J."/>
            <person name="Rabbinowitsch E."/>
            <person name="Steffen D."/>
            <person name="Sanders M."/>
            <person name="Ma J."/>
            <person name="Kohara Y."/>
            <person name="Sharp S."/>
            <person name="Simmonds M.N."/>
            <person name="Spiegler S."/>
            <person name="Tivey A."/>
            <person name="Sugano S."/>
            <person name="White B."/>
            <person name="Walker D."/>
            <person name="Woodward J.R."/>
            <person name="Winckler T."/>
            <person name="Tanaka Y."/>
            <person name="Shaulsky G."/>
            <person name="Schleicher M."/>
            <person name="Weinstock G.M."/>
            <person name="Rosenthal A."/>
            <person name="Cox E.C."/>
            <person name="Chisholm R.L."/>
            <person name="Gibbs R.A."/>
            <person name="Loomis W.F."/>
            <person name="Platzer M."/>
            <person name="Kay R.R."/>
            <person name="Williams J.G."/>
            <person name="Dear P.H."/>
            <person name="Noegel A.A."/>
            <person name="Barrell B.G."/>
            <person name="Kuspa A."/>
        </authorList>
    </citation>
    <scope>NUCLEOTIDE SEQUENCE [LARGE SCALE GENOMIC DNA]</scope>
    <source>
        <strain>AX4</strain>
    </source>
</reference>
<reference key="3">
    <citation type="submission" date="2009-07" db="UniProtKB">
        <authorList>
            <person name="Bienvenut W.V."/>
            <person name="Ura S."/>
            <person name="Insall R.H."/>
        </authorList>
    </citation>
    <scope>PROTEIN SEQUENCE OF 1-6; 262-269; 461-473; 559-566; 720-730; 773-782; 823-831; 893-902; 948-958; 1013-1019; 1051-1065; 1279-1286; 1427-1440 AND 1732-1740</scope>
    <scope>ACETYLATION AT MET-1</scope>
    <scope>IDENTIFICATION BY MASS SPECTROMETRY</scope>
    <source>
        <strain>AX2</strain>
    </source>
</reference>
<reference key="4">
    <citation type="journal article" date="1989" name="Eur. J. Biochem.">
        <title>Molecular characterization of a Dictyostelium discoideum gene encoding a multifunctional enzyme of the pyrimidine pathway.</title>
        <authorList>
            <person name="Faure M."/>
            <person name="Camonis J.H."/>
            <person name="Jacquet M."/>
        </authorList>
    </citation>
    <scope>NUCLEOTIDE SEQUENCE [GENOMIC DNA] OF 40-506 AND 1214-2224</scope>
    <source>
        <strain>AX3</strain>
    </source>
</reference>
<reference key="5">
    <citation type="journal article" date="1992" name="DNA Seq.">
        <title>Carbamoyl phosphate synthetase (CPSase) in the PYR1-3 multigene of Dictyostelium discoideum.</title>
        <authorList>
            <person name="Elgar G."/>
            <person name="Schofield J.P."/>
        </authorList>
    </citation>
    <scope>NUCLEOTIDE SEQUENCE [GENOMIC DNA] OF 406-1447</scope>
    <source>
        <strain>AX2</strain>
    </source>
</reference>
<feature type="chain" id="PRO_0000199504" description="Multifunctional protein pyr1-3">
    <location>
        <begin position="1"/>
        <end position="2225"/>
    </location>
</feature>
<feature type="domain" description="Glutamine amidotransferase type-1" evidence="9">
    <location>
        <begin position="196"/>
        <end position="388"/>
    </location>
</feature>
<feature type="domain" description="ATP-grasp 1" evidence="8">
    <location>
        <begin position="530"/>
        <end position="722"/>
    </location>
</feature>
<feature type="domain" description="ATP-grasp 2" evidence="8">
    <location>
        <begin position="1069"/>
        <end position="1260"/>
    </location>
</feature>
<feature type="domain" description="MGS-like" evidence="10">
    <location>
        <begin position="1324"/>
        <end position="1470"/>
    </location>
</feature>
<feature type="region of interest" description="GATase (Glutamine amidotransferase)" evidence="4">
    <location>
        <begin position="40"/>
        <end position="390"/>
    </location>
</feature>
<feature type="region of interest" description="Linker" evidence="4">
    <location>
        <begin position="391"/>
        <end position="405"/>
    </location>
</feature>
<feature type="region of interest" description="CPSase (Carbamoyl-phosphate synthase)" evidence="4">
    <location>
        <begin position="406"/>
        <end position="1461"/>
    </location>
</feature>
<feature type="region of interest" description="CPSase A" evidence="4">
    <location>
        <begin position="406"/>
        <end position="948"/>
    </location>
</feature>
<feature type="region of interest" description="CPSase B" evidence="4">
    <location>
        <begin position="949"/>
        <end position="1461"/>
    </location>
</feature>
<feature type="region of interest" description="DHOase (dihydroorotase)" evidence="4">
    <location>
        <begin position="1463"/>
        <end position="1797"/>
    </location>
</feature>
<feature type="region of interest" description="Linker" evidence="4">
    <location>
        <begin position="1798"/>
        <end position="1916"/>
    </location>
</feature>
<feature type="region of interest" description="ATCase (Aspartate transcarbamylase)" evidence="4">
    <location>
        <begin position="1917"/>
        <end position="2225"/>
    </location>
</feature>
<feature type="active site" description="Nucleophile; for GATase activity" evidence="9">
    <location>
        <position position="275"/>
    </location>
</feature>
<feature type="active site" description="For GATase activity" evidence="9">
    <location>
        <position position="361"/>
    </location>
</feature>
<feature type="active site" description="For GATase activity" evidence="9">
    <location>
        <position position="363"/>
    </location>
</feature>
<feature type="active site" description="For DHOase activity" evidence="2">
    <location>
        <position position="1695"/>
    </location>
</feature>
<feature type="binding site" evidence="5">
    <location>
        <position position="51"/>
    </location>
    <ligand>
        <name>L-glutamine</name>
        <dbReference type="ChEBI" id="CHEBI:58359"/>
    </ligand>
</feature>
<feature type="binding site" evidence="5">
    <location>
        <position position="245"/>
    </location>
    <ligand>
        <name>L-glutamine</name>
        <dbReference type="ChEBI" id="CHEBI:58359"/>
    </ligand>
</feature>
<feature type="binding site" evidence="5">
    <location>
        <position position="247"/>
    </location>
    <ligand>
        <name>L-glutamine</name>
        <dbReference type="ChEBI" id="CHEBI:58359"/>
    </ligand>
</feature>
<feature type="binding site" evidence="5">
    <location>
        <position position="279"/>
    </location>
    <ligand>
        <name>L-glutamine</name>
        <dbReference type="ChEBI" id="CHEBI:58359"/>
    </ligand>
</feature>
<feature type="binding site" evidence="5">
    <location>
        <position position="317"/>
    </location>
    <ligand>
        <name>L-glutamine</name>
        <dbReference type="ChEBI" id="CHEBI:58359"/>
    </ligand>
</feature>
<feature type="binding site" evidence="5">
    <location>
        <position position="319"/>
    </location>
    <ligand>
        <name>L-glutamine</name>
        <dbReference type="ChEBI" id="CHEBI:58359"/>
    </ligand>
</feature>
<feature type="binding site" evidence="5">
    <location>
        <position position="320"/>
    </location>
    <ligand>
        <name>L-glutamine</name>
        <dbReference type="ChEBI" id="CHEBI:58359"/>
    </ligand>
</feature>
<feature type="binding site" evidence="1">
    <location>
        <position position="526"/>
    </location>
    <ligand>
        <name>ATP</name>
        <dbReference type="ChEBI" id="CHEBI:30616"/>
        <label>1</label>
    </ligand>
</feature>
<feature type="binding site" evidence="1">
    <location>
        <position position="566"/>
    </location>
    <ligand>
        <name>ATP</name>
        <dbReference type="ChEBI" id="CHEBI:30616"/>
        <label>1</label>
    </ligand>
</feature>
<feature type="binding site" evidence="1">
    <location>
        <position position="572"/>
    </location>
    <ligand>
        <name>ATP</name>
        <dbReference type="ChEBI" id="CHEBI:30616"/>
        <label>1</label>
    </ligand>
</feature>
<feature type="binding site" evidence="1">
    <location>
        <position position="573"/>
    </location>
    <ligand>
        <name>ATP</name>
        <dbReference type="ChEBI" id="CHEBI:30616"/>
        <label>1</label>
    </ligand>
</feature>
<feature type="binding site" evidence="1">
    <location>
        <position position="603"/>
    </location>
    <ligand>
        <name>ATP</name>
        <dbReference type="ChEBI" id="CHEBI:30616"/>
        <label>1</label>
    </ligand>
</feature>
<feature type="binding site" evidence="1">
    <location>
        <position position="610"/>
    </location>
    <ligand>
        <name>ATP</name>
        <dbReference type="ChEBI" id="CHEBI:30616"/>
        <label>1</label>
    </ligand>
</feature>
<feature type="binding site" evidence="1">
    <location>
        <position position="636"/>
    </location>
    <ligand>
        <name>ATP</name>
        <dbReference type="ChEBI" id="CHEBI:30616"/>
        <label>1</label>
    </ligand>
</feature>
<feature type="binding site" evidence="1">
    <location>
        <position position="637"/>
    </location>
    <ligand>
        <name>ATP</name>
        <dbReference type="ChEBI" id="CHEBI:30616"/>
        <label>1</label>
    </ligand>
</feature>
<feature type="binding site" evidence="1">
    <location>
        <position position="638"/>
    </location>
    <ligand>
        <name>ATP</name>
        <dbReference type="ChEBI" id="CHEBI:30616"/>
        <label>1</label>
    </ligand>
</feature>
<feature type="binding site" evidence="1">
    <location>
        <position position="679"/>
    </location>
    <ligand>
        <name>ATP</name>
        <dbReference type="ChEBI" id="CHEBI:30616"/>
        <label>1</label>
    </ligand>
</feature>
<feature type="binding site" evidence="8">
    <location>
        <position position="679"/>
    </location>
    <ligand>
        <name>Mg(2+)</name>
        <dbReference type="ChEBI" id="CHEBI:18420"/>
        <label>1</label>
    </ligand>
</feature>
<feature type="binding site" evidence="8">
    <location>
        <position position="679"/>
    </location>
    <ligand>
        <name>Mn(2+)</name>
        <dbReference type="ChEBI" id="CHEBI:29035"/>
        <label>1</label>
    </ligand>
</feature>
<feature type="binding site" evidence="1">
    <location>
        <position position="693"/>
    </location>
    <ligand>
        <name>ATP</name>
        <dbReference type="ChEBI" id="CHEBI:30616"/>
        <label>1</label>
    </ligand>
</feature>
<feature type="binding site" evidence="8">
    <location>
        <position position="693"/>
    </location>
    <ligand>
        <name>Mg(2+)</name>
        <dbReference type="ChEBI" id="CHEBI:18420"/>
        <label>1</label>
    </ligand>
</feature>
<feature type="binding site" evidence="8">
    <location>
        <position position="693"/>
    </location>
    <ligand>
        <name>Mg(2+)</name>
        <dbReference type="ChEBI" id="CHEBI:18420"/>
        <label>2</label>
    </ligand>
</feature>
<feature type="binding site" evidence="8">
    <location>
        <position position="693"/>
    </location>
    <ligand>
        <name>Mn(2+)</name>
        <dbReference type="ChEBI" id="CHEBI:29035"/>
        <label>1</label>
    </ligand>
</feature>
<feature type="binding site" evidence="8">
    <location>
        <position position="693"/>
    </location>
    <ligand>
        <name>Mn(2+)</name>
        <dbReference type="ChEBI" id="CHEBI:29035"/>
        <label>2</label>
    </ligand>
</feature>
<feature type="binding site" evidence="8">
    <location>
        <position position="695"/>
    </location>
    <ligand>
        <name>Mg(2+)</name>
        <dbReference type="ChEBI" id="CHEBI:18420"/>
        <label>2</label>
    </ligand>
</feature>
<feature type="binding site" evidence="8">
    <location>
        <position position="695"/>
    </location>
    <ligand>
        <name>Mn(2+)</name>
        <dbReference type="ChEBI" id="CHEBI:29035"/>
        <label>2</label>
    </ligand>
</feature>
<feature type="binding site" evidence="1">
    <location>
        <position position="1105"/>
    </location>
    <ligand>
        <name>ATP</name>
        <dbReference type="ChEBI" id="CHEBI:30616"/>
        <label>2</label>
    </ligand>
</feature>
<feature type="binding site" evidence="1">
    <location>
        <position position="1144"/>
    </location>
    <ligand>
        <name>ATP</name>
        <dbReference type="ChEBI" id="CHEBI:30616"/>
        <label>2</label>
    </ligand>
</feature>
<feature type="binding site" evidence="1">
    <location>
        <position position="1146"/>
    </location>
    <ligand>
        <name>ATP</name>
        <dbReference type="ChEBI" id="CHEBI:30616"/>
        <label>2</label>
    </ligand>
</feature>
<feature type="binding site" evidence="1">
    <location>
        <position position="1151"/>
    </location>
    <ligand>
        <name>ATP</name>
        <dbReference type="ChEBI" id="CHEBI:30616"/>
        <label>2</label>
    </ligand>
</feature>
<feature type="binding site" evidence="1">
    <location>
        <position position="1176"/>
    </location>
    <ligand>
        <name>ATP</name>
        <dbReference type="ChEBI" id="CHEBI:30616"/>
        <label>2</label>
    </ligand>
</feature>
<feature type="binding site" evidence="1">
    <location>
        <position position="1177"/>
    </location>
    <ligand>
        <name>ATP</name>
        <dbReference type="ChEBI" id="CHEBI:30616"/>
        <label>2</label>
    </ligand>
</feature>
<feature type="binding site" evidence="1">
    <location>
        <position position="1178"/>
    </location>
    <ligand>
        <name>ATP</name>
        <dbReference type="ChEBI" id="CHEBI:30616"/>
        <label>2</label>
    </ligand>
</feature>
<feature type="binding site" evidence="1">
    <location>
        <position position="1179"/>
    </location>
    <ligand>
        <name>ATP</name>
        <dbReference type="ChEBI" id="CHEBI:30616"/>
        <label>2</label>
    </ligand>
</feature>
<feature type="binding site" evidence="1">
    <location>
        <position position="1219"/>
    </location>
    <ligand>
        <name>ATP</name>
        <dbReference type="ChEBI" id="CHEBI:30616"/>
        <label>2</label>
    </ligand>
</feature>
<feature type="binding site" evidence="8">
    <location>
        <position position="1219"/>
    </location>
    <ligand>
        <name>Mg(2+)</name>
        <dbReference type="ChEBI" id="CHEBI:18420"/>
        <label>3</label>
    </ligand>
</feature>
<feature type="binding site" evidence="8">
    <location>
        <position position="1219"/>
    </location>
    <ligand>
        <name>Mn(2+)</name>
        <dbReference type="ChEBI" id="CHEBI:29035"/>
        <label>3</label>
    </ligand>
</feature>
<feature type="binding site" evidence="1">
    <location>
        <position position="1231"/>
    </location>
    <ligand>
        <name>ATP</name>
        <dbReference type="ChEBI" id="CHEBI:30616"/>
        <label>2</label>
    </ligand>
</feature>
<feature type="binding site" evidence="8">
    <location>
        <position position="1231"/>
    </location>
    <ligand>
        <name>Mg(2+)</name>
        <dbReference type="ChEBI" id="CHEBI:18420"/>
        <label>3</label>
    </ligand>
</feature>
<feature type="binding site" evidence="8">
    <location>
        <position position="1231"/>
    </location>
    <ligand>
        <name>Mg(2+)</name>
        <dbReference type="ChEBI" id="CHEBI:18420"/>
        <label>4</label>
    </ligand>
</feature>
<feature type="binding site" evidence="8">
    <location>
        <position position="1231"/>
    </location>
    <ligand>
        <name>Mn(2+)</name>
        <dbReference type="ChEBI" id="CHEBI:29035"/>
        <label>3</label>
    </ligand>
</feature>
<feature type="binding site" evidence="8">
    <location>
        <position position="1231"/>
    </location>
    <ligand>
        <name>Mn(2+)</name>
        <dbReference type="ChEBI" id="CHEBI:29035"/>
        <label>4</label>
    </ligand>
</feature>
<feature type="binding site" evidence="8">
    <location>
        <position position="1233"/>
    </location>
    <ligand>
        <name>Mg(2+)</name>
        <dbReference type="ChEBI" id="CHEBI:18420"/>
        <label>4</label>
    </ligand>
</feature>
<feature type="binding site" evidence="8">
    <location>
        <position position="1233"/>
    </location>
    <ligand>
        <name>Mn(2+)</name>
        <dbReference type="ChEBI" id="CHEBI:29035"/>
        <label>4</label>
    </ligand>
</feature>
<feature type="binding site" evidence="7">
    <location>
        <position position="1479"/>
    </location>
    <ligand>
        <name>Zn(2+)</name>
        <dbReference type="ChEBI" id="CHEBI:29105"/>
        <label>1</label>
    </ligand>
</feature>
<feature type="binding site" evidence="7">
    <location>
        <position position="1479"/>
    </location>
    <ligand>
        <name>Zn(2+)</name>
        <dbReference type="ChEBI" id="CHEBI:29105"/>
        <label>2</label>
    </ligand>
</feature>
<feature type="binding site" evidence="7">
    <location>
        <position position="1481"/>
    </location>
    <ligand>
        <name>Zn(2+)</name>
        <dbReference type="ChEBI" id="CHEBI:29105"/>
        <label>1</label>
    </ligand>
</feature>
<feature type="binding site" evidence="7">
    <location>
        <position position="1483"/>
    </location>
    <ligand>
        <name>(S)-dihydroorotate</name>
        <dbReference type="ChEBI" id="CHEBI:30864"/>
    </ligand>
</feature>
<feature type="binding site" evidence="7">
    <location>
        <position position="1513"/>
    </location>
    <ligand>
        <name>(S)-dihydroorotate</name>
        <dbReference type="ChEBI" id="CHEBI:30864"/>
    </ligand>
</feature>
<feature type="binding site" description="via carbamate group" evidence="7">
    <location>
        <position position="1564"/>
    </location>
    <ligand>
        <name>Zn(2+)</name>
        <dbReference type="ChEBI" id="CHEBI:29105"/>
        <label>1</label>
    </ligand>
</feature>
<feature type="binding site" description="via carbamate group" evidence="7">
    <location>
        <position position="1564"/>
    </location>
    <ligand>
        <name>Zn(2+)</name>
        <dbReference type="ChEBI" id="CHEBI:29105"/>
        <label>3</label>
    </ligand>
</feature>
<feature type="binding site" evidence="7">
    <location>
        <position position="1599"/>
    </location>
    <ligand>
        <name>Zn(2+)</name>
        <dbReference type="ChEBI" id="CHEBI:29105"/>
        <label>3</label>
    </ligand>
</feature>
<feature type="binding site" evidence="7">
    <location>
        <position position="1622"/>
    </location>
    <ligand>
        <name>Zn(2+)</name>
        <dbReference type="ChEBI" id="CHEBI:29105"/>
        <label>2</label>
    </ligand>
</feature>
<feature type="binding site" evidence="7">
    <location>
        <position position="1623"/>
    </location>
    <ligand>
        <name>Zn(2+)</name>
        <dbReference type="ChEBI" id="CHEBI:29105"/>
        <label>3</label>
    </ligand>
</feature>
<feature type="binding site" evidence="7">
    <location>
        <position position="1646"/>
    </location>
    <ligand>
        <name>Zn(2+)</name>
        <dbReference type="ChEBI" id="CHEBI:29105"/>
        <label>2</label>
    </ligand>
</feature>
<feature type="binding site" evidence="7">
    <location>
        <position position="1670"/>
    </location>
    <ligand>
        <name>(S)-dihydroorotate</name>
        <dbReference type="ChEBI" id="CHEBI:30864"/>
    </ligand>
</feature>
<feature type="binding site" evidence="7">
    <location>
        <position position="1695"/>
    </location>
    <ligand>
        <name>Zn(2+)</name>
        <dbReference type="ChEBI" id="CHEBI:29105"/>
        <label>1</label>
    </ligand>
</feature>
<feature type="binding site" evidence="7">
    <location>
        <position position="1699"/>
    </location>
    <ligand>
        <name>(S)-dihydroorotate</name>
        <dbReference type="ChEBI" id="CHEBI:30864"/>
    </ligand>
</feature>
<feature type="binding site" evidence="7">
    <location>
        <position position="1711"/>
    </location>
    <ligand>
        <name>(S)-dihydroorotate</name>
        <dbReference type="ChEBI" id="CHEBI:30864"/>
    </ligand>
</feature>
<feature type="binding site" evidence="6">
    <location>
        <position position="1974"/>
    </location>
    <ligand>
        <name>carbamoyl phosphate</name>
        <dbReference type="ChEBI" id="CHEBI:58228"/>
    </ligand>
</feature>
<feature type="binding site" evidence="6">
    <location>
        <position position="1975"/>
    </location>
    <ligand>
        <name>carbamoyl phosphate</name>
        <dbReference type="ChEBI" id="CHEBI:58228"/>
    </ligand>
</feature>
<feature type="binding site" evidence="6">
    <location>
        <position position="2002"/>
    </location>
    <ligand>
        <name>L-aspartate</name>
        <dbReference type="ChEBI" id="CHEBI:29991"/>
    </ligand>
</feature>
<feature type="binding site" evidence="6">
    <location>
        <position position="2023"/>
    </location>
    <ligand>
        <name>carbamoyl phosphate</name>
        <dbReference type="ChEBI" id="CHEBI:58228"/>
    </ligand>
</feature>
<feature type="binding site" evidence="6">
    <location>
        <position position="2051"/>
    </location>
    <ligand>
        <name>carbamoyl phosphate</name>
        <dbReference type="ChEBI" id="CHEBI:58228"/>
    </ligand>
</feature>
<feature type="binding site" evidence="6">
    <location>
        <position position="2054"/>
    </location>
    <ligand>
        <name>carbamoyl phosphate</name>
        <dbReference type="ChEBI" id="CHEBI:58228"/>
    </ligand>
</feature>
<feature type="binding site" evidence="6">
    <location>
        <position position="2084"/>
    </location>
    <ligand>
        <name>L-aspartate</name>
        <dbReference type="ChEBI" id="CHEBI:29991"/>
    </ligand>
</feature>
<feature type="binding site" evidence="6">
    <location>
        <position position="2145"/>
    </location>
    <ligand>
        <name>L-aspartate</name>
        <dbReference type="ChEBI" id="CHEBI:29991"/>
    </ligand>
</feature>
<feature type="binding site" evidence="6">
    <location>
        <position position="2184"/>
    </location>
    <ligand>
        <name>carbamoyl phosphate</name>
        <dbReference type="ChEBI" id="CHEBI:58228"/>
    </ligand>
</feature>
<feature type="binding site" evidence="6">
    <location>
        <position position="2185"/>
    </location>
    <ligand>
        <name>carbamoyl phosphate</name>
        <dbReference type="ChEBI" id="CHEBI:58228"/>
    </ligand>
</feature>
<feature type="modified residue" description="N-acetylmethionine" evidence="11">
    <location>
        <position position="1"/>
    </location>
</feature>
<feature type="modified residue" description="N6-carboxylysine" evidence="7">
    <location>
        <position position="1564"/>
    </location>
</feature>
<feature type="sequence conflict" description="In Ref. 4; CAA32782." evidence="12" ref="4">
    <original>NNEIKVIE</original>
    <variation>TMKSKLSN</variation>
    <location>
        <begin position="1224"/>
        <end position="1231"/>
    </location>
</feature>
<feature type="sequence conflict" description="In Ref. 5; CAA39077." evidence="12" ref="5">
    <location>
        <position position="1402"/>
    </location>
</feature>
<proteinExistence type="evidence at protein level"/>
<organism>
    <name type="scientific">Dictyostelium discoideum</name>
    <name type="common">Social amoeba</name>
    <dbReference type="NCBI Taxonomy" id="44689"/>
    <lineage>
        <taxon>Eukaryota</taxon>
        <taxon>Amoebozoa</taxon>
        <taxon>Evosea</taxon>
        <taxon>Eumycetozoa</taxon>
        <taxon>Dictyostelia</taxon>
        <taxon>Dictyosteliales</taxon>
        <taxon>Dictyosteliaceae</taxon>
        <taxon>Dictyostelium</taxon>
    </lineage>
</organism>
<sequence length="2225" mass="246027">MDILNRKKGCLVLEDGTKLSGYSFGSERSVAGECVFSTGMVGYNESISDPSYTGQILVFSFPLIGNYGVPSFRERDPESGLAVNFESDKAHVQAIICSEYCDEYSHWAAEKSLSEWLKESNIPGLYGIDTRALITKIREKGSLKGKVIIGDFDESKLEFEDINLRNLVAEVSTKEIKEYKAAENNKKTGEKRKNKKVIVLDCGIKNNQIRCLLNRGVDLKVVPWDYDVVANESINDYDGVFISNGPGDPSLCGKAIENIRKVLALPVAKAVFGVCMGNQLLGLAAGAQTHKMAFGNRGLNQPCVDQISGRCHITSQNHGFVIDSNSLPAGSGWKTYFINANDASNEGIYHESKPWFSVQFHPEAMAGPTDTEYLFDNFVDNVCGEQQHKSPMNKSKIIDCPKGINKVLILGSGGLSIGQAGEFDYSGSQAIKALKEEGIKTILINPNIATVQTSPGLADKVYFLPVNASSVQKVIENENPDGILVTFGGQTALNCGIELYKSGILEKYNCKVLGTPIETIIATEDRGIFAEKLSEINERIAPSMACNSLEESLIEAEKIGYPVIVRAAYCLGGLGSGFADNKEQLTALVTEAMATSSQVLVEKSLKGWKEIEYEVLRDSKDNCITVCNMENFDPLGIHTGESIVVAPSQTLSDREYQMLRETAIKTVRHLGVIGECNIQYSLNPYSEEYCIIEVNARLSRSSALASKATGYPLAFISAKVALGYDLAALRNTITKKTTACFEPSLDYLVVKMPRWDLKKFTRVSNKISSSMKSVGEVMSIGRKFEEAIQKAIRMVMDGAVEGFQAGVFPTSDEELEHPTNNRILVLASAFKDGYSIDRVHQLTKIDKWFLTKLKAIIDLENHLSTYKEPSQIPSEILKFSKQQGFSDKQIARAVGTTELNVRDYRKKMGIIPCTKHIDTVAAEFPAQNNYLYMTYNGETNDVNINEKSYITLGSGSYRIGSSVEFDWCAVSCIRTLRSLGLKSIMINFNPETVSTDYDECDYLYFEELSLERVLDIYERGGPNSNHGVILSVGGQIPNNLAIPLSRCNVKVLGTHPDMIDSAENRYKFSRLLDTIGIDQPLWKELTSVSDTKDFCESVGFPCLVRPSYVLSGAAMNVVHSSQDLETFLTEAAAVSRDHPVVISKFIQEAKEIEIDAVADNGRIVLFAISEHVENAGVHSGDATIVCPAQDLDDATILKVEETARKIAEALNVSGPFNIQFIAKNNEIKVIECNLRCSRSFPFVSKTLNINFIELATKIIIKHQYDLPVVNPINYVGVKVPQFSFIRLKGADPVLGVEMASTGEVACFGNTREEAYVKGLISTGFKAPEKNVLLSIGSFKEKHEFLPSAHKLIKLGYTLFGTQGTADFYSENGVPVTQLNWDEEDLGENVIQKKMTENTIHLFINLPSKNKYRRPSSFMSRGYSLRRVAIDFQVPLITNIKCAKLFVDSLSYMKGPMPIENVDWRTSNKIIRLPGLVDVHVHLREPGATHKEDWDSGTATALAGGFTMVGAMPNTNPAIMDDASFELCKSLAASKARCDYGIFIGATFTNTTTAGKFASDAMGMKMYLEETFAPLPLKDDINVWRDHIMNWPGTTPICVHADGRNLAAILLLGWMYDKHMHVCHVSHKEEIDIIRDAKKRGMKLSCEVSPHHLTLCDKDIPRIGAGQSEVRPKLGTEEDLNALWDNIDYIDMIATDHAPHTWEEKCSAKPPPGFPGLETSLPLMLTAVHNGRITIEDLVMKMHTNPIRIFNLPEQPDTYIEVDMEQEWTIPKKPLYSRCGWTPFEGLQVRGKVVKVVLRGQIAFIDGKIIAQKGFGLNLRSKEYQVEKERLLNTTKPIYDKIPTVQSTKNQTTNITSPSLISDSPNKAINKIKSTSTSTTPNTQEQSTQHLPLVGSNLASAVLNKKEDTLQTAFNISDNSLAGKHIFSVKQFNRKQLHALFGIAHEMRILVKRSGGSDLLKGKVLATLFYEPSTRTQCSFTAAMQRLGGSVVTVDNVSSSVAKGESIADTIQTLESYCDAVCMRHPAVGSVESAIQVAKKPIINAGDGVGEHPTQALLDVFTIREELGTVNGLTITVVGDLKHGRTVHSLVRLLANYQVKINYVSPSSLSMPTEIIKELNEKGIEQKEYTNIESILPTTNVLYVTRVQKERFQSIEEYEKVKDSFIITPHTLTKASDNMIVMHPLPRINEISPEVDSDPRAAYFRQMENGLYVRMSLLALVFGAGV</sequence>